<name>TRPB_MYCIT</name>
<proteinExistence type="inferred from homology"/>
<protein>
    <recommendedName>
        <fullName>Tryptophan synthase beta chain</fullName>
        <ecNumber>4.2.1.20</ecNumber>
    </recommendedName>
</protein>
<accession>O68905</accession>
<feature type="chain" id="PRO_0000098967" description="Tryptophan synthase beta chain">
    <location>
        <begin position="1"/>
        <end position="421"/>
    </location>
</feature>
<feature type="modified residue" description="N6-(pyridoxal phosphate)lysine" evidence="1">
    <location>
        <position position="110"/>
    </location>
</feature>
<dbReference type="EC" id="4.2.1.20"/>
<dbReference type="EMBL" id="AF057042">
    <property type="protein sequence ID" value="AAC17134.1"/>
    <property type="molecule type" value="Genomic_DNA"/>
</dbReference>
<dbReference type="SMR" id="O68905"/>
<dbReference type="UniPathway" id="UPA00035">
    <property type="reaction ID" value="UER00044"/>
</dbReference>
<dbReference type="GO" id="GO:0005737">
    <property type="term" value="C:cytoplasm"/>
    <property type="evidence" value="ECO:0007669"/>
    <property type="project" value="TreeGrafter"/>
</dbReference>
<dbReference type="GO" id="GO:0004834">
    <property type="term" value="F:tryptophan synthase activity"/>
    <property type="evidence" value="ECO:0007669"/>
    <property type="project" value="UniProtKB-UniRule"/>
</dbReference>
<dbReference type="CDD" id="cd06446">
    <property type="entry name" value="Trp-synth_B"/>
    <property type="match status" value="1"/>
</dbReference>
<dbReference type="FunFam" id="3.40.50.1100:FF:000001">
    <property type="entry name" value="Tryptophan synthase beta chain"/>
    <property type="match status" value="1"/>
</dbReference>
<dbReference type="FunFam" id="3.40.50.1100:FF:000004">
    <property type="entry name" value="Tryptophan synthase beta chain"/>
    <property type="match status" value="1"/>
</dbReference>
<dbReference type="Gene3D" id="3.40.50.1100">
    <property type="match status" value="2"/>
</dbReference>
<dbReference type="HAMAP" id="MF_00133">
    <property type="entry name" value="Trp_synth_beta"/>
    <property type="match status" value="1"/>
</dbReference>
<dbReference type="InterPro" id="IPR006653">
    <property type="entry name" value="Trp_synth_b_CS"/>
</dbReference>
<dbReference type="InterPro" id="IPR006654">
    <property type="entry name" value="Trp_synth_beta"/>
</dbReference>
<dbReference type="InterPro" id="IPR023026">
    <property type="entry name" value="Trp_synth_beta/beta-like"/>
</dbReference>
<dbReference type="InterPro" id="IPR001926">
    <property type="entry name" value="TrpB-like_PALP"/>
</dbReference>
<dbReference type="InterPro" id="IPR036052">
    <property type="entry name" value="TrpB-like_PALP_sf"/>
</dbReference>
<dbReference type="NCBIfam" id="TIGR00263">
    <property type="entry name" value="trpB"/>
    <property type="match status" value="1"/>
</dbReference>
<dbReference type="PANTHER" id="PTHR48077:SF3">
    <property type="entry name" value="TRYPTOPHAN SYNTHASE"/>
    <property type="match status" value="1"/>
</dbReference>
<dbReference type="PANTHER" id="PTHR48077">
    <property type="entry name" value="TRYPTOPHAN SYNTHASE-RELATED"/>
    <property type="match status" value="1"/>
</dbReference>
<dbReference type="Pfam" id="PF00291">
    <property type="entry name" value="PALP"/>
    <property type="match status" value="1"/>
</dbReference>
<dbReference type="PIRSF" id="PIRSF001413">
    <property type="entry name" value="Trp_syn_beta"/>
    <property type="match status" value="1"/>
</dbReference>
<dbReference type="SUPFAM" id="SSF53686">
    <property type="entry name" value="Tryptophan synthase beta subunit-like PLP-dependent enzymes"/>
    <property type="match status" value="1"/>
</dbReference>
<dbReference type="PROSITE" id="PS00168">
    <property type="entry name" value="TRP_SYNTHASE_BETA"/>
    <property type="match status" value="1"/>
</dbReference>
<gene>
    <name type="primary">trpB</name>
</gene>
<reference key="1">
    <citation type="submission" date="1998-04" db="EMBL/GenBank/DDBJ databases">
        <title>Nucleotide sequence and functional analysis of the tryptophan synthase genes of Mycobacterium intracellulare.</title>
        <authorList>
            <person name="Alavi M.R."/>
            <person name="Rouse D.A."/>
            <person name="Morris S.L."/>
        </authorList>
    </citation>
    <scope>NUCLEOTIDE SEQUENCE [GENOMIC DNA]</scope>
    <source>
        <strain>Batty</strain>
    </source>
</reference>
<sequence length="421" mass="44953">MDISPRTRPDLPLPSAAIAEPTRHEPDAGGHFGVYGGRYVAEALMAVIEEVTTAYEKERVNQDFLDTLDYLQANYAGRPSPLYEAPRLSEQAGARIFLKREDLNHTGSHKINNVLGQALLAQRMGKKRVIAETGAGQHGVATATACALLGLECVIYMGAVDTERQALNVARMRLLGATVVSVQSGSKTLKDAINEAFRDWVTNADNTFYCFGTAAGPHPFPAMVRDFQRIIGLEARAQIQAQAGRLPDAVLACIGGGSNAIGIFHPFIDDPGVRLIGFEAAGDGVETGRHAATFSGGSPGAFQGSFSYLLQDEDGQTIESHSISAGLDYPGVGPEHAWLRERVSTTRGWVRNTRGCARFRTLCRTEGIIPAIESAHAVAGALKVAPELGKAAIIVVNLSGRGDKDVETAAQWFGLLGSSDR</sequence>
<evidence type="ECO:0000250" key="1"/>
<evidence type="ECO:0000305" key="2"/>
<organism>
    <name type="scientific">Mycobacterium intracellulare</name>
    <dbReference type="NCBI Taxonomy" id="1767"/>
    <lineage>
        <taxon>Bacteria</taxon>
        <taxon>Bacillati</taxon>
        <taxon>Actinomycetota</taxon>
        <taxon>Actinomycetes</taxon>
        <taxon>Mycobacteriales</taxon>
        <taxon>Mycobacteriaceae</taxon>
        <taxon>Mycobacterium</taxon>
        <taxon>Mycobacterium avium complex (MAC)</taxon>
    </lineage>
</organism>
<keyword id="KW-0028">Amino-acid biosynthesis</keyword>
<keyword id="KW-0057">Aromatic amino acid biosynthesis</keyword>
<keyword id="KW-0456">Lyase</keyword>
<keyword id="KW-0663">Pyridoxal phosphate</keyword>
<keyword id="KW-0822">Tryptophan biosynthesis</keyword>
<comment type="function">
    <text evidence="1">The beta subunit is responsible for the synthesis of L-tryptophan from indole and L-serine.</text>
</comment>
<comment type="catalytic activity">
    <reaction>
        <text>(1S,2R)-1-C-(indol-3-yl)glycerol 3-phosphate + L-serine = D-glyceraldehyde 3-phosphate + L-tryptophan + H2O</text>
        <dbReference type="Rhea" id="RHEA:10532"/>
        <dbReference type="ChEBI" id="CHEBI:15377"/>
        <dbReference type="ChEBI" id="CHEBI:33384"/>
        <dbReference type="ChEBI" id="CHEBI:57912"/>
        <dbReference type="ChEBI" id="CHEBI:58866"/>
        <dbReference type="ChEBI" id="CHEBI:59776"/>
        <dbReference type="EC" id="4.2.1.20"/>
    </reaction>
</comment>
<comment type="cofactor">
    <cofactor evidence="1">
        <name>pyridoxal 5'-phosphate</name>
        <dbReference type="ChEBI" id="CHEBI:597326"/>
    </cofactor>
</comment>
<comment type="pathway">
    <text>Amino-acid biosynthesis; L-tryptophan biosynthesis; L-tryptophan from chorismate: step 5/5.</text>
</comment>
<comment type="subunit">
    <text evidence="1">Tetramer of two alpha and two beta chains.</text>
</comment>
<comment type="similarity">
    <text evidence="2">Belongs to the TrpB family.</text>
</comment>